<protein>
    <recommendedName>
        <fullName evidence="1">Phosphoribosylformylglycinamidine cyclo-ligase</fullName>
        <ecNumber evidence="1">6.3.3.1</ecNumber>
    </recommendedName>
    <alternativeName>
        <fullName evidence="1">AIR synthase</fullName>
    </alternativeName>
    <alternativeName>
        <fullName evidence="1">AIRS</fullName>
    </alternativeName>
    <alternativeName>
        <fullName evidence="1">Phosphoribosyl-aminoimidazole synthetase</fullName>
    </alternativeName>
</protein>
<comment type="catalytic activity">
    <reaction evidence="1">
        <text>2-formamido-N(1)-(5-O-phospho-beta-D-ribosyl)acetamidine + ATP = 5-amino-1-(5-phospho-beta-D-ribosyl)imidazole + ADP + phosphate + H(+)</text>
        <dbReference type="Rhea" id="RHEA:23032"/>
        <dbReference type="ChEBI" id="CHEBI:15378"/>
        <dbReference type="ChEBI" id="CHEBI:30616"/>
        <dbReference type="ChEBI" id="CHEBI:43474"/>
        <dbReference type="ChEBI" id="CHEBI:137981"/>
        <dbReference type="ChEBI" id="CHEBI:147287"/>
        <dbReference type="ChEBI" id="CHEBI:456216"/>
        <dbReference type="EC" id="6.3.3.1"/>
    </reaction>
</comment>
<comment type="pathway">
    <text evidence="1">Purine metabolism; IMP biosynthesis via de novo pathway; 5-amino-1-(5-phospho-D-ribosyl)imidazole from N(2)-formyl-N(1)-(5-phospho-D-ribosyl)glycinamide: step 2/2.</text>
</comment>
<comment type="subcellular location">
    <subcellularLocation>
        <location evidence="1">Cytoplasm</location>
    </subcellularLocation>
</comment>
<comment type="similarity">
    <text evidence="1">Belongs to the AIR synthase family.</text>
</comment>
<organism>
    <name type="scientific">Dinoroseobacter shibae (strain DSM 16493 / NCIMB 14021 / DFL 12)</name>
    <dbReference type="NCBI Taxonomy" id="398580"/>
    <lineage>
        <taxon>Bacteria</taxon>
        <taxon>Pseudomonadati</taxon>
        <taxon>Pseudomonadota</taxon>
        <taxon>Alphaproteobacteria</taxon>
        <taxon>Rhodobacterales</taxon>
        <taxon>Roseobacteraceae</taxon>
        <taxon>Dinoroseobacter</taxon>
    </lineage>
</organism>
<proteinExistence type="inferred from homology"/>
<reference key="1">
    <citation type="journal article" date="2010" name="ISME J.">
        <title>The complete genome sequence of the algal symbiont Dinoroseobacter shibae: a hitchhiker's guide to life in the sea.</title>
        <authorList>
            <person name="Wagner-Dobler I."/>
            <person name="Ballhausen B."/>
            <person name="Berger M."/>
            <person name="Brinkhoff T."/>
            <person name="Buchholz I."/>
            <person name="Bunk B."/>
            <person name="Cypionka H."/>
            <person name="Daniel R."/>
            <person name="Drepper T."/>
            <person name="Gerdts G."/>
            <person name="Hahnke S."/>
            <person name="Han C."/>
            <person name="Jahn D."/>
            <person name="Kalhoefer D."/>
            <person name="Kiss H."/>
            <person name="Klenk H.P."/>
            <person name="Kyrpides N."/>
            <person name="Liebl W."/>
            <person name="Liesegang H."/>
            <person name="Meincke L."/>
            <person name="Pati A."/>
            <person name="Petersen J."/>
            <person name="Piekarski T."/>
            <person name="Pommerenke C."/>
            <person name="Pradella S."/>
            <person name="Pukall R."/>
            <person name="Rabus R."/>
            <person name="Stackebrandt E."/>
            <person name="Thole S."/>
            <person name="Thompson L."/>
            <person name="Tielen P."/>
            <person name="Tomasch J."/>
            <person name="von Jan M."/>
            <person name="Wanphrut N."/>
            <person name="Wichels A."/>
            <person name="Zech H."/>
            <person name="Simon M."/>
        </authorList>
    </citation>
    <scope>NUCLEOTIDE SEQUENCE [LARGE SCALE GENOMIC DNA]</scope>
    <source>
        <strain>DSM 16493 / NCIMB 14021 / DFL 12</strain>
    </source>
</reference>
<sequence>MTTDTPPPKPGLTYAEAGVDIDAGNTLVDRIKPAAKATSRPGVMSGLGGFGALFDLRAAGYADPVLVAATDGVGTKLRIAIDTGHVDTIGIDLVAMCVNDLVCQGAEPLLFLDYFATGKLDVAEAATIVEGIARGCATSGCALIGGETAEMPGMYAKGDFDLAGFAVGAMERGGALPANVAAGDMILGLASDGVHSNGYSLVRRIVERSGLGWGDPAPFEGRTLGAALLTPTRLYVQPALAAIRAGGVHGLAHVTGGGLTENLPRVLPEGLGIEINLGAWELPPVFRWLAAEGGLDEAELLKTFNAGIGMALIVAPDRAEALADLLAGAGERVAVIGHVTEGAGAVHYRGTLL</sequence>
<gene>
    <name evidence="1" type="primary">purM</name>
    <name type="ordered locus">Dshi_1889</name>
</gene>
<keyword id="KW-0067">ATP-binding</keyword>
<keyword id="KW-0963">Cytoplasm</keyword>
<keyword id="KW-0436">Ligase</keyword>
<keyword id="KW-0547">Nucleotide-binding</keyword>
<keyword id="KW-0658">Purine biosynthesis</keyword>
<keyword id="KW-1185">Reference proteome</keyword>
<feature type="chain" id="PRO_1000083457" description="Phosphoribosylformylglycinamidine cyclo-ligase">
    <location>
        <begin position="1"/>
        <end position="353"/>
    </location>
</feature>
<accession>A8LNB8</accession>
<name>PUR5_DINSH</name>
<evidence type="ECO:0000255" key="1">
    <source>
        <dbReference type="HAMAP-Rule" id="MF_00741"/>
    </source>
</evidence>
<dbReference type="EC" id="6.3.3.1" evidence="1"/>
<dbReference type="EMBL" id="CP000830">
    <property type="protein sequence ID" value="ABV93631.1"/>
    <property type="molecule type" value="Genomic_DNA"/>
</dbReference>
<dbReference type="RefSeq" id="WP_012178561.1">
    <property type="nucleotide sequence ID" value="NC_009952.1"/>
</dbReference>
<dbReference type="SMR" id="A8LNB8"/>
<dbReference type="STRING" id="398580.Dshi_1889"/>
<dbReference type="KEGG" id="dsh:Dshi_1889"/>
<dbReference type="eggNOG" id="COG0150">
    <property type="taxonomic scope" value="Bacteria"/>
</dbReference>
<dbReference type="HOGENOM" id="CLU_047116_0_0_5"/>
<dbReference type="OrthoDB" id="9777881at2"/>
<dbReference type="UniPathway" id="UPA00074">
    <property type="reaction ID" value="UER00129"/>
</dbReference>
<dbReference type="Proteomes" id="UP000006833">
    <property type="component" value="Chromosome"/>
</dbReference>
<dbReference type="GO" id="GO:0005829">
    <property type="term" value="C:cytosol"/>
    <property type="evidence" value="ECO:0007669"/>
    <property type="project" value="TreeGrafter"/>
</dbReference>
<dbReference type="GO" id="GO:0005524">
    <property type="term" value="F:ATP binding"/>
    <property type="evidence" value="ECO:0007669"/>
    <property type="project" value="UniProtKB-KW"/>
</dbReference>
<dbReference type="GO" id="GO:0004637">
    <property type="term" value="F:phosphoribosylamine-glycine ligase activity"/>
    <property type="evidence" value="ECO:0007669"/>
    <property type="project" value="TreeGrafter"/>
</dbReference>
<dbReference type="GO" id="GO:0004641">
    <property type="term" value="F:phosphoribosylformylglycinamidine cyclo-ligase activity"/>
    <property type="evidence" value="ECO:0007669"/>
    <property type="project" value="UniProtKB-UniRule"/>
</dbReference>
<dbReference type="GO" id="GO:0006189">
    <property type="term" value="P:'de novo' IMP biosynthetic process"/>
    <property type="evidence" value="ECO:0007669"/>
    <property type="project" value="UniProtKB-UniRule"/>
</dbReference>
<dbReference type="GO" id="GO:0046084">
    <property type="term" value="P:adenine biosynthetic process"/>
    <property type="evidence" value="ECO:0007669"/>
    <property type="project" value="TreeGrafter"/>
</dbReference>
<dbReference type="CDD" id="cd02196">
    <property type="entry name" value="PurM"/>
    <property type="match status" value="1"/>
</dbReference>
<dbReference type="FunFam" id="3.30.1330.10:FF:000001">
    <property type="entry name" value="Phosphoribosylformylglycinamidine cyclo-ligase"/>
    <property type="match status" value="1"/>
</dbReference>
<dbReference type="FunFam" id="3.90.650.10:FF:000011">
    <property type="entry name" value="Phosphoribosylformylglycinamidine cyclo-ligase"/>
    <property type="match status" value="1"/>
</dbReference>
<dbReference type="Gene3D" id="3.90.650.10">
    <property type="entry name" value="PurM-like C-terminal domain"/>
    <property type="match status" value="1"/>
</dbReference>
<dbReference type="Gene3D" id="3.30.1330.10">
    <property type="entry name" value="PurM-like, N-terminal domain"/>
    <property type="match status" value="1"/>
</dbReference>
<dbReference type="HAMAP" id="MF_00741">
    <property type="entry name" value="AIRS"/>
    <property type="match status" value="1"/>
</dbReference>
<dbReference type="InterPro" id="IPR010918">
    <property type="entry name" value="PurM-like_C_dom"/>
</dbReference>
<dbReference type="InterPro" id="IPR036676">
    <property type="entry name" value="PurM-like_C_sf"/>
</dbReference>
<dbReference type="InterPro" id="IPR016188">
    <property type="entry name" value="PurM-like_N"/>
</dbReference>
<dbReference type="InterPro" id="IPR036921">
    <property type="entry name" value="PurM-like_N_sf"/>
</dbReference>
<dbReference type="InterPro" id="IPR004733">
    <property type="entry name" value="PurM_cligase"/>
</dbReference>
<dbReference type="NCBIfam" id="TIGR00878">
    <property type="entry name" value="purM"/>
    <property type="match status" value="1"/>
</dbReference>
<dbReference type="PANTHER" id="PTHR10520:SF12">
    <property type="entry name" value="TRIFUNCTIONAL PURINE BIOSYNTHETIC PROTEIN ADENOSINE-3"/>
    <property type="match status" value="1"/>
</dbReference>
<dbReference type="PANTHER" id="PTHR10520">
    <property type="entry name" value="TRIFUNCTIONAL PURINE BIOSYNTHETIC PROTEIN ADENOSINE-3-RELATED"/>
    <property type="match status" value="1"/>
</dbReference>
<dbReference type="Pfam" id="PF00586">
    <property type="entry name" value="AIRS"/>
    <property type="match status" value="1"/>
</dbReference>
<dbReference type="Pfam" id="PF02769">
    <property type="entry name" value="AIRS_C"/>
    <property type="match status" value="1"/>
</dbReference>
<dbReference type="SUPFAM" id="SSF56042">
    <property type="entry name" value="PurM C-terminal domain-like"/>
    <property type="match status" value="1"/>
</dbReference>
<dbReference type="SUPFAM" id="SSF55326">
    <property type="entry name" value="PurM N-terminal domain-like"/>
    <property type="match status" value="1"/>
</dbReference>